<accession>P42365</accession>
<reference key="1">
    <citation type="journal article" date="1994" name="Infect. Immun.">
        <title>Cloning and nucleotide sequence analysis of psaA, the Streptococcus pneumoniae gene encoding a 37-kilodalton protein homologous to previously reported Streptococcus sp. adhesins.</title>
        <authorList>
            <person name="Sampson J.S."/>
            <person name="O'Connor S.P."/>
            <person name="Stinson A.R."/>
            <person name="Tharpe J.A."/>
            <person name="Russell H."/>
        </authorList>
    </citation>
    <scope>NUCLEOTIDE SEQUENCE [GENOMIC DNA]</scope>
    <source>
        <strain>R36A</strain>
    </source>
</reference>
<reference key="2">
    <citation type="journal article" date="1997" name="FEBS Lett.">
        <title>Scavengase p20: a novel family of bacterial antioxidant enzymes.</title>
        <authorList>
            <person name="Wan X.Y."/>
            <person name="Zhou Y."/>
            <person name="Yan Z.Y."/>
            <person name="Wang H.L."/>
            <person name="Hou Y.D."/>
            <person name="Jin D.Y."/>
        </authorList>
    </citation>
    <scope>PROTEIN SEQUENCE OF 2-14</scope>
    <scope>FUNCTION</scope>
    <scope>CATALYTIC ACTIVITY</scope>
    <source>
        <strain>R36A</strain>
    </source>
</reference>
<name>TPX_STREE</name>
<proteinExistence type="evidence at protein level"/>
<organism>
    <name type="scientific">Streptococcus pneumoniae</name>
    <dbReference type="NCBI Taxonomy" id="1313"/>
    <lineage>
        <taxon>Bacteria</taxon>
        <taxon>Bacillati</taxon>
        <taxon>Bacillota</taxon>
        <taxon>Bacilli</taxon>
        <taxon>Lactobacillales</taxon>
        <taxon>Streptococcaceae</taxon>
        <taxon>Streptococcus</taxon>
    </lineage>
</organism>
<dbReference type="EC" id="1.11.1.24" evidence="2"/>
<dbReference type="EMBL" id="L19055">
    <property type="protein sequence ID" value="AAA16799.1"/>
    <property type="molecule type" value="Unassigned_DNA"/>
</dbReference>
<dbReference type="SMR" id="P42365"/>
<dbReference type="GO" id="GO:0140824">
    <property type="term" value="F:thioredoxin-dependent peroxiredoxin activity"/>
    <property type="evidence" value="ECO:0007669"/>
    <property type="project" value="UniProtKB-EC"/>
</dbReference>
<dbReference type="Gene3D" id="3.40.30.10">
    <property type="entry name" value="Glutaredoxin"/>
    <property type="match status" value="1"/>
</dbReference>
<dbReference type="InterPro" id="IPR036249">
    <property type="entry name" value="Thioredoxin-like_sf"/>
</dbReference>
<dbReference type="InterPro" id="IPR050455">
    <property type="entry name" value="Tpx_Peroxidase_subfamily"/>
</dbReference>
<dbReference type="PANTHER" id="PTHR43110">
    <property type="entry name" value="THIOL PEROXIDASE"/>
    <property type="match status" value="1"/>
</dbReference>
<dbReference type="PANTHER" id="PTHR43110:SF1">
    <property type="entry name" value="THIOL PEROXIDASE"/>
    <property type="match status" value="1"/>
</dbReference>
<dbReference type="SUPFAM" id="SSF52833">
    <property type="entry name" value="Thioredoxin-like"/>
    <property type="match status" value="1"/>
</dbReference>
<gene>
    <name type="primary">tpx</name>
</gene>
<comment type="function">
    <text evidence="2">Thiol-specific peroxidase that catalyzes the reduction of hydrogen peroxide and organic hydroperoxides to water and alcohols, respectively. Plays a role in cell protection against oxidative stress by detoxifying peroxides.</text>
</comment>
<comment type="catalytic activity">
    <reaction evidence="2">
        <text>a hydroperoxide + [thioredoxin]-dithiol = an alcohol + [thioredoxin]-disulfide + H2O</text>
        <dbReference type="Rhea" id="RHEA:62620"/>
        <dbReference type="Rhea" id="RHEA-COMP:10698"/>
        <dbReference type="Rhea" id="RHEA-COMP:10700"/>
        <dbReference type="ChEBI" id="CHEBI:15377"/>
        <dbReference type="ChEBI" id="CHEBI:29950"/>
        <dbReference type="ChEBI" id="CHEBI:30879"/>
        <dbReference type="ChEBI" id="CHEBI:35924"/>
        <dbReference type="ChEBI" id="CHEBI:50058"/>
        <dbReference type="EC" id="1.11.1.24"/>
    </reaction>
</comment>
<comment type="subunit">
    <text evidence="1">Homodimer.</text>
</comment>
<comment type="similarity">
    <text evidence="3">Belongs to the peroxiredoxin family. Tpx subfamily.</text>
</comment>
<evidence type="ECO:0000250" key="1">
    <source>
        <dbReference type="UniProtKB" id="P0A862"/>
    </source>
</evidence>
<evidence type="ECO:0000269" key="2">
    <source>
    </source>
</evidence>
<evidence type="ECO:0000305" key="3"/>
<feature type="initiator methionine" description="Removed" evidence="2">
    <location>
        <position position="1"/>
    </location>
</feature>
<feature type="chain" id="PRO_0000187914" description="Thiol peroxidase">
    <location>
        <begin position="2"/>
        <end position="50" status="greater than"/>
    </location>
</feature>
<feature type="non-terminal residue">
    <location>
        <position position="50"/>
    </location>
</feature>
<sequence>MTTFLGNPVTFTGSQLQVGDTAHDFSLTTPNLEKKSLADFAGKKKVLSVI</sequence>
<keyword id="KW-0049">Antioxidant</keyword>
<keyword id="KW-0903">Direct protein sequencing</keyword>
<keyword id="KW-0560">Oxidoreductase</keyword>
<keyword id="KW-0575">Peroxidase</keyword>
<keyword id="KW-0676">Redox-active center</keyword>
<protein>
    <recommendedName>
        <fullName>Thiol peroxidase</fullName>
        <shortName>Tpx</shortName>
        <ecNumber evidence="2">1.11.1.24</ecNumber>
    </recommendedName>
    <alternativeName>
        <fullName>Peroxiredoxin tpx</fullName>
        <shortName>Prx</shortName>
    </alternativeName>
    <alternativeName>
        <fullName>Thioredoxin peroxidase</fullName>
    </alternativeName>
    <alternativeName>
        <fullName>Thioredoxin-dependent peroxiredoxin</fullName>
    </alternativeName>
</protein>